<accession>B1ISY2</accession>
<proteinExistence type="inferred from homology"/>
<comment type="function">
    <text evidence="1">Has an important function as a repair enzyme for proteins that have been inactivated by oxidation. Catalyzes the reversible oxidation-reduction of methionine sulfoxide in proteins to methionine.</text>
</comment>
<comment type="catalytic activity">
    <reaction evidence="1">
        <text>L-methionyl-[protein] + [thioredoxin]-disulfide + H2O = L-methionyl-(S)-S-oxide-[protein] + [thioredoxin]-dithiol</text>
        <dbReference type="Rhea" id="RHEA:14217"/>
        <dbReference type="Rhea" id="RHEA-COMP:10698"/>
        <dbReference type="Rhea" id="RHEA-COMP:10700"/>
        <dbReference type="Rhea" id="RHEA-COMP:12313"/>
        <dbReference type="Rhea" id="RHEA-COMP:12315"/>
        <dbReference type="ChEBI" id="CHEBI:15377"/>
        <dbReference type="ChEBI" id="CHEBI:16044"/>
        <dbReference type="ChEBI" id="CHEBI:29950"/>
        <dbReference type="ChEBI" id="CHEBI:44120"/>
        <dbReference type="ChEBI" id="CHEBI:50058"/>
        <dbReference type="EC" id="1.8.4.11"/>
    </reaction>
</comment>
<comment type="catalytic activity">
    <reaction evidence="1">
        <text>[thioredoxin]-disulfide + L-methionine + H2O = L-methionine (S)-S-oxide + [thioredoxin]-dithiol</text>
        <dbReference type="Rhea" id="RHEA:19993"/>
        <dbReference type="Rhea" id="RHEA-COMP:10698"/>
        <dbReference type="Rhea" id="RHEA-COMP:10700"/>
        <dbReference type="ChEBI" id="CHEBI:15377"/>
        <dbReference type="ChEBI" id="CHEBI:29950"/>
        <dbReference type="ChEBI" id="CHEBI:50058"/>
        <dbReference type="ChEBI" id="CHEBI:57844"/>
        <dbReference type="ChEBI" id="CHEBI:58772"/>
        <dbReference type="EC" id="1.8.4.11"/>
    </reaction>
</comment>
<comment type="similarity">
    <text evidence="1">Belongs to the MsrA Met sulfoxide reductase family.</text>
</comment>
<sequence length="212" mass="23315">MSLFDKKHLVSPADALPGRNTPMPVATLHAVNGHSMTNVPDGMEIAIFAMGCFWGVERLFWQLPGVYSTAAGYTGGYTPNPTYREVCSGDTGHAEAVRIVYDPSVISYEQLLQVFWENHDPAQGMRQGNDHGTQYRSAIYPLTPEQDAAARASLERFQAAMLAADDDRHITTEIANATPFYYAEDDHQQYLHKNPYGYCGIGGIGVCLPPEA</sequence>
<name>MSRA_ECOLC</name>
<reference key="1">
    <citation type="submission" date="2008-02" db="EMBL/GenBank/DDBJ databases">
        <title>Complete sequence of Escherichia coli C str. ATCC 8739.</title>
        <authorList>
            <person name="Copeland A."/>
            <person name="Lucas S."/>
            <person name="Lapidus A."/>
            <person name="Glavina del Rio T."/>
            <person name="Dalin E."/>
            <person name="Tice H."/>
            <person name="Bruce D."/>
            <person name="Goodwin L."/>
            <person name="Pitluck S."/>
            <person name="Kiss H."/>
            <person name="Brettin T."/>
            <person name="Detter J.C."/>
            <person name="Han C."/>
            <person name="Kuske C.R."/>
            <person name="Schmutz J."/>
            <person name="Larimer F."/>
            <person name="Land M."/>
            <person name="Hauser L."/>
            <person name="Kyrpides N."/>
            <person name="Mikhailova N."/>
            <person name="Ingram L."/>
            <person name="Richardson P."/>
        </authorList>
    </citation>
    <scope>NUCLEOTIDE SEQUENCE [LARGE SCALE GENOMIC DNA]</scope>
    <source>
        <strain>ATCC 8739 / DSM 1576 / NBRC 3972 / NCIMB 8545 / WDCM 00012 / Crooks</strain>
    </source>
</reference>
<feature type="chain" id="PRO_1000087348" description="Peptide methionine sulfoxide reductase MsrA">
    <location>
        <begin position="1"/>
        <end position="212"/>
    </location>
</feature>
<feature type="active site" evidence="1">
    <location>
        <position position="52"/>
    </location>
</feature>
<keyword id="KW-0560">Oxidoreductase</keyword>
<organism>
    <name type="scientific">Escherichia coli (strain ATCC 8739 / DSM 1576 / NBRC 3972 / NCIMB 8545 / WDCM 00012 / Crooks)</name>
    <dbReference type="NCBI Taxonomy" id="481805"/>
    <lineage>
        <taxon>Bacteria</taxon>
        <taxon>Pseudomonadati</taxon>
        <taxon>Pseudomonadota</taxon>
        <taxon>Gammaproteobacteria</taxon>
        <taxon>Enterobacterales</taxon>
        <taxon>Enterobacteriaceae</taxon>
        <taxon>Escherichia</taxon>
    </lineage>
</organism>
<gene>
    <name evidence="1" type="primary">msrA</name>
    <name type="ordered locus">EcolC_3788</name>
</gene>
<dbReference type="EC" id="1.8.4.11" evidence="1"/>
<dbReference type="EMBL" id="CP000946">
    <property type="protein sequence ID" value="ACA79393.1"/>
    <property type="molecule type" value="Genomic_DNA"/>
</dbReference>
<dbReference type="RefSeq" id="WP_001295196.1">
    <property type="nucleotide sequence ID" value="NZ_MTFT01000012.1"/>
</dbReference>
<dbReference type="BMRB" id="B1ISY2"/>
<dbReference type="SMR" id="B1ISY2"/>
<dbReference type="GeneID" id="93777602"/>
<dbReference type="KEGG" id="ecl:EcolC_3788"/>
<dbReference type="HOGENOM" id="CLU_031040_10_3_6"/>
<dbReference type="GO" id="GO:0005737">
    <property type="term" value="C:cytoplasm"/>
    <property type="evidence" value="ECO:0007669"/>
    <property type="project" value="TreeGrafter"/>
</dbReference>
<dbReference type="GO" id="GO:0036456">
    <property type="term" value="F:L-methionine-(S)-S-oxide reductase activity"/>
    <property type="evidence" value="ECO:0007669"/>
    <property type="project" value="TreeGrafter"/>
</dbReference>
<dbReference type="GO" id="GO:0008113">
    <property type="term" value="F:peptide-methionine (S)-S-oxide reductase activity"/>
    <property type="evidence" value="ECO:0007669"/>
    <property type="project" value="UniProtKB-UniRule"/>
</dbReference>
<dbReference type="GO" id="GO:0034599">
    <property type="term" value="P:cellular response to oxidative stress"/>
    <property type="evidence" value="ECO:0007669"/>
    <property type="project" value="TreeGrafter"/>
</dbReference>
<dbReference type="GO" id="GO:0036211">
    <property type="term" value="P:protein modification process"/>
    <property type="evidence" value="ECO:0007669"/>
    <property type="project" value="UniProtKB-UniRule"/>
</dbReference>
<dbReference type="FunFam" id="3.30.1060.10:FF:000001">
    <property type="entry name" value="Peptide methionine sulfoxide reductase MsrA"/>
    <property type="match status" value="1"/>
</dbReference>
<dbReference type="Gene3D" id="3.30.1060.10">
    <property type="entry name" value="Peptide methionine sulphoxide reductase MsrA"/>
    <property type="match status" value="1"/>
</dbReference>
<dbReference type="HAMAP" id="MF_01401">
    <property type="entry name" value="MsrA"/>
    <property type="match status" value="1"/>
</dbReference>
<dbReference type="InterPro" id="IPR002569">
    <property type="entry name" value="Met_Sox_Rdtase_MsrA_dom"/>
</dbReference>
<dbReference type="InterPro" id="IPR036509">
    <property type="entry name" value="Met_Sox_Rdtase_MsrA_sf"/>
</dbReference>
<dbReference type="InterPro" id="IPR050162">
    <property type="entry name" value="MsrA_MetSO_reductase"/>
</dbReference>
<dbReference type="NCBIfam" id="TIGR00401">
    <property type="entry name" value="msrA"/>
    <property type="match status" value="1"/>
</dbReference>
<dbReference type="PANTHER" id="PTHR42799">
    <property type="entry name" value="MITOCHONDRIAL PEPTIDE METHIONINE SULFOXIDE REDUCTASE"/>
    <property type="match status" value="1"/>
</dbReference>
<dbReference type="PANTHER" id="PTHR42799:SF2">
    <property type="entry name" value="MITOCHONDRIAL PEPTIDE METHIONINE SULFOXIDE REDUCTASE"/>
    <property type="match status" value="1"/>
</dbReference>
<dbReference type="Pfam" id="PF01625">
    <property type="entry name" value="PMSR"/>
    <property type="match status" value="1"/>
</dbReference>
<dbReference type="SUPFAM" id="SSF55068">
    <property type="entry name" value="Peptide methionine sulfoxide reductase"/>
    <property type="match status" value="1"/>
</dbReference>
<evidence type="ECO:0000255" key="1">
    <source>
        <dbReference type="HAMAP-Rule" id="MF_01401"/>
    </source>
</evidence>
<protein>
    <recommendedName>
        <fullName evidence="1">Peptide methionine sulfoxide reductase MsrA</fullName>
        <shortName evidence="1">Protein-methionine-S-oxide reductase</shortName>
        <ecNumber evidence="1">1.8.4.11</ecNumber>
    </recommendedName>
    <alternativeName>
        <fullName evidence="1">Peptide-methionine (S)-S-oxide reductase</fullName>
        <shortName evidence="1">Peptide Met(O) reductase</shortName>
    </alternativeName>
</protein>